<comment type="function">
    <text evidence="1 2">Cell wall formation. Catalyzes epimerization of the terminal L-glutamate in UDP-N-acetyl-alpha-D-muramoyl-L-alanyl-L-glutamate.</text>
</comment>
<comment type="catalytic activity">
    <reaction evidence="1 2">
        <text>UDP-N-acetyl-alpha-D-muramoyl-L-alanyl-L-glutamate + ATP + H2O = UDP-N-acetyl-alpha-D-muramoyl-L-alanyl-D-glutamate + AMP + diphosphate + H(+)</text>
        <dbReference type="Rhea" id="RHEA:58812"/>
        <dbReference type="ChEBI" id="CHEBI:15377"/>
        <dbReference type="ChEBI" id="CHEBI:15378"/>
        <dbReference type="ChEBI" id="CHEBI:30616"/>
        <dbReference type="ChEBI" id="CHEBI:33019"/>
        <dbReference type="ChEBI" id="CHEBI:83900"/>
        <dbReference type="ChEBI" id="CHEBI:142725"/>
        <dbReference type="ChEBI" id="CHEBI:456215"/>
        <dbReference type="EC" id="5.1.1.23"/>
    </reaction>
</comment>
<comment type="pathway">
    <text evidence="1 5">Cell wall biogenesis; peptidoglycan biosynthesis.</text>
</comment>
<comment type="similarity">
    <text evidence="1 4">Belongs to the MurL family.</text>
</comment>
<gene>
    <name evidence="1 3" type="primary">murL</name>
    <name evidence="6" type="ordered locus">Strop_3006</name>
</gene>
<sequence>MPNEQLRRMDAFTFPSYSFDLSTGEALFDYALTGPDGEQRFTEVITLPLPASPPSDERVATLGRVLELLHVIAGVSYYKTAAPHRLVLPAPLGPSAVALVTAVYTKGLAEYAYRNALPHVLRLRPEVPSGEVTPPVGYDTDGRRPLSAVGGGKDSIVSLEALRRDGLDPLPFSVNPNRVIEAVNVASGLPALAARRRIDPVLFDLNAAGALNGHIPVTAINSLIAVATSVLNGLGPVVMSNERSASDPNLIWDGHQINHQWSKGVEAEGLLRGALEEHAGLTDPYFSLLRQLSELHIARTFARIGGYDDVVTSCNAAFKLRGASDRWCRDCPKCRFVFLALAPFMPRERITRVFGGDLLADPAQLPGYRELLGVDGHKPFECVGEVEESVVALSLLGEQSGWRDAPVVSALIDAVPETAWKTAATSAVFTPGGPSFTPTRYADALGSLTEPARNLPG</sequence>
<dbReference type="EC" id="5.1.1.23" evidence="1 2"/>
<dbReference type="EMBL" id="CP000667">
    <property type="protein sequence ID" value="ABP55443.1"/>
    <property type="molecule type" value="Genomic_DNA"/>
</dbReference>
<dbReference type="RefSeq" id="WP_012014221.1">
    <property type="nucleotide sequence ID" value="NC_009380.1"/>
</dbReference>
<dbReference type="STRING" id="369723.Strop_3006"/>
<dbReference type="KEGG" id="stp:Strop_3006"/>
<dbReference type="PATRIC" id="fig|369723.5.peg.3093"/>
<dbReference type="eggNOG" id="COG1365">
    <property type="taxonomic scope" value="Bacteria"/>
</dbReference>
<dbReference type="HOGENOM" id="CLU_045660_0_0_11"/>
<dbReference type="UniPathway" id="UPA00219"/>
<dbReference type="Proteomes" id="UP000000235">
    <property type="component" value="Chromosome"/>
</dbReference>
<dbReference type="GO" id="GO:0005737">
    <property type="term" value="C:cytoplasm"/>
    <property type="evidence" value="ECO:0007669"/>
    <property type="project" value="UniProtKB-UniRule"/>
</dbReference>
<dbReference type="GO" id="GO:0016855">
    <property type="term" value="F:racemase and epimerase activity, acting on amino acids and derivatives"/>
    <property type="evidence" value="ECO:0007669"/>
    <property type="project" value="UniProtKB-UniRule"/>
</dbReference>
<dbReference type="GO" id="GO:0051301">
    <property type="term" value="P:cell division"/>
    <property type="evidence" value="ECO:0007669"/>
    <property type="project" value="UniProtKB-KW"/>
</dbReference>
<dbReference type="GO" id="GO:0071555">
    <property type="term" value="P:cell wall organization"/>
    <property type="evidence" value="ECO:0007669"/>
    <property type="project" value="UniProtKB-KW"/>
</dbReference>
<dbReference type="GO" id="GO:0009252">
    <property type="term" value="P:peptidoglycan biosynthetic process"/>
    <property type="evidence" value="ECO:0007669"/>
    <property type="project" value="UniProtKB-UniRule"/>
</dbReference>
<dbReference type="GO" id="GO:0008360">
    <property type="term" value="P:regulation of cell shape"/>
    <property type="evidence" value="ECO:0007669"/>
    <property type="project" value="UniProtKB-KW"/>
</dbReference>
<dbReference type="HAMAP" id="MF_02209">
    <property type="entry name" value="MurL"/>
    <property type="match status" value="1"/>
</dbReference>
<dbReference type="InterPro" id="IPR043689">
    <property type="entry name" value="MurL"/>
</dbReference>
<feature type="chain" id="PRO_0000446512" description="UDP-N-acetyl-alpha-D-muramoyl-L-alanyl-L-glutamate epimerase">
    <location>
        <begin position="1"/>
        <end position="457"/>
    </location>
</feature>
<evidence type="ECO:0000255" key="1">
    <source>
        <dbReference type="HAMAP-Rule" id="MF_02209"/>
    </source>
</evidence>
<evidence type="ECO:0000269" key="2">
    <source>
    </source>
</evidence>
<evidence type="ECO:0000303" key="3">
    <source>
    </source>
</evidence>
<evidence type="ECO:0000305" key="4"/>
<evidence type="ECO:0000305" key="5">
    <source>
    </source>
</evidence>
<evidence type="ECO:0000312" key="6">
    <source>
        <dbReference type="EMBL" id="ABP55443.1"/>
    </source>
</evidence>
<keyword id="KW-0131">Cell cycle</keyword>
<keyword id="KW-0132">Cell division</keyword>
<keyword id="KW-0133">Cell shape</keyword>
<keyword id="KW-0961">Cell wall biogenesis/degradation</keyword>
<keyword id="KW-0413">Isomerase</keyword>
<keyword id="KW-0573">Peptidoglycan synthesis</keyword>
<keyword id="KW-1185">Reference proteome</keyword>
<accession>A4X982</accession>
<proteinExistence type="evidence at protein level"/>
<protein>
    <recommendedName>
        <fullName evidence="1 4">UDP-N-acetyl-alpha-D-muramoyl-L-alanyl-L-glutamate epimerase</fullName>
        <ecNumber evidence="1 2">5.1.1.23</ecNumber>
    </recommendedName>
    <alternativeName>
        <fullName evidence="1 3">UDP-MurNAc-L-Ala-L-Glu epimerase</fullName>
    </alternativeName>
</protein>
<name>MURL_SALTO</name>
<organism>
    <name type="scientific">Salinispora tropica (strain ATCC BAA-916 / DSM 44818 / JCM 13857 / NBRC 105044 / CNB-440)</name>
    <dbReference type="NCBI Taxonomy" id="369723"/>
    <lineage>
        <taxon>Bacteria</taxon>
        <taxon>Bacillati</taxon>
        <taxon>Actinomycetota</taxon>
        <taxon>Actinomycetes</taxon>
        <taxon>Micromonosporales</taxon>
        <taxon>Micromonosporaceae</taxon>
        <taxon>Salinispora</taxon>
    </lineage>
</organism>
<reference key="1">
    <citation type="journal article" date="2007" name="Proc. Natl. Acad. Sci. U.S.A.">
        <title>Genome sequencing reveals complex secondary metabolome in the marine actinomycete Salinispora tropica.</title>
        <authorList>
            <person name="Udwary D.W."/>
            <person name="Zeigler L."/>
            <person name="Asolkar R.N."/>
            <person name="Singan V."/>
            <person name="Lapidus A."/>
            <person name="Fenical W."/>
            <person name="Jensen P.R."/>
            <person name="Moore B.S."/>
        </authorList>
    </citation>
    <scope>NUCLEOTIDE SEQUENCE [LARGE SCALE GENOMIC DNA]</scope>
    <source>
        <strain>ATCC BAA-916 / DSM 44818 / JCM 13857 / NBRC 105044 / CNB-440</strain>
    </source>
</reference>
<reference key="2">
    <citation type="journal article" date="2017" name="J. Am. Chem. Soc.">
        <title>A glycopeptidyl-glutamate epimerase for bacterial peptidoglycan biosynthesis.</title>
        <authorList>
            <person name="Feng R."/>
            <person name="Satoh Y."/>
            <person name="Ogasawara Y."/>
            <person name="Yoshimura T."/>
            <person name="Dairi T."/>
        </authorList>
    </citation>
    <scope>FUNCTION</scope>
    <scope>CATALYTIC ACTIVITY</scope>
    <scope>PATHWAY</scope>
    <source>
        <strain>ATCC BAA-916 / DSM 44818 / JCM 13857 / NBRC 105044 / CNB-440</strain>
    </source>
</reference>